<evidence type="ECO:0000250" key="1">
    <source>
        <dbReference type="UniProtKB" id="P9WM79"/>
    </source>
</evidence>
<evidence type="ECO:0000269" key="2">
    <source>
    </source>
</evidence>
<evidence type="ECO:0000305" key="3"/>
<sequence>MAGNPDVVTVLLGGDVMLGRGVDQILPHPGKPQLRERYMRDATGYVRLAERVNGRIPLPVDWRWPWGEALAVLENTATDVCLINLETTITADGEFADRKPVCYRMHPDNVPALTALRPHVCALANNHILDFGYQGLTDTVAALAGAGIQSVGAGADLLAARRSALVTVGHERRVIVGSVAAESSGVPESWAARRDRPGVWLIRDPAQRDVADDVAAQVLADKRPGDIAIVSMHWGSNWGYATAPGDVAFAHRLIDAGIDMVHGHSSHHPRPIEIYRGKPILYGCGDVVDDYEGIGGHESFRSELRLLYLTVTDPASGNLISLQMLPLRVSRMRLQRASQTDTEWLRNTIERISRRFGIRVVTRPDNLLEVVPAANLTSKE</sequence>
<keyword id="KW-1185">Reference proteome</keyword>
<keyword id="KW-0346">Stress response</keyword>
<gene>
    <name type="ordered locus">MT0602</name>
</gene>
<name>Y0574_MYCTO</name>
<reference key="1">
    <citation type="journal article" date="2002" name="J. Bacteriol.">
        <title>Whole-genome comparison of Mycobacterium tuberculosis clinical and laboratory strains.</title>
        <authorList>
            <person name="Fleischmann R.D."/>
            <person name="Alland D."/>
            <person name="Eisen J.A."/>
            <person name="Carpenter L."/>
            <person name="White O."/>
            <person name="Peterson J.D."/>
            <person name="DeBoy R.T."/>
            <person name="Dodson R.J."/>
            <person name="Gwinn M.L."/>
            <person name="Haft D.H."/>
            <person name="Hickey E.K."/>
            <person name="Kolonay J.F."/>
            <person name="Nelson W.C."/>
            <person name="Umayam L.A."/>
            <person name="Ermolaeva M.D."/>
            <person name="Salzberg S.L."/>
            <person name="Delcher A."/>
            <person name="Utterback T.R."/>
            <person name="Weidman J.F."/>
            <person name="Khouri H.M."/>
            <person name="Gill J."/>
            <person name="Mikula A."/>
            <person name="Bishai W."/>
            <person name="Jacobs W.R. Jr."/>
            <person name="Venter J.C."/>
            <person name="Fraser C.M."/>
        </authorList>
    </citation>
    <scope>NUCLEOTIDE SEQUENCE [LARGE SCALE GENOMIC DNA]</scope>
    <source>
        <strain>CDC 1551 / Oshkosh</strain>
    </source>
</reference>
<reference key="2">
    <citation type="journal article" date="2003" name="J. Exp. Med.">
        <title>Inhibition of respiration by nitric oxide induces a Mycobacterium tuberculosis dormancy program.</title>
        <authorList>
            <person name="Voskuil M.I."/>
            <person name="Schnappinger D."/>
            <person name="Visconti K.C."/>
            <person name="Harrell M.I."/>
            <person name="Dolganov G.M."/>
            <person name="Sherman D.R."/>
            <person name="Schoolnik G.K."/>
        </authorList>
    </citation>
    <scope>INDUCTION BY NITRIC OXIDE (NO) AND BY HYPOXIA</scope>
    <scope>DORMANCY REGULON</scope>
    <source>
        <strain>CDC 1551 / Oshkosh</strain>
    </source>
</reference>
<accession>P9WM78</accession>
<accession>L0T731</accession>
<accession>O53771</accession>
<accession>Q7D9L9</accession>
<protein>
    <recommendedName>
        <fullName evidence="1">Probable polyglutamine synthesis accessory protein MT0602</fullName>
    </recommendedName>
</protein>
<feature type="chain" id="PRO_0000427351" description="Probable polyglutamine synthesis accessory protein MT0602">
    <location>
        <begin position="1"/>
        <end position="380"/>
    </location>
</feature>
<dbReference type="EMBL" id="AE000516">
    <property type="protein sequence ID" value="AAK44825.1"/>
    <property type="molecule type" value="Genomic_DNA"/>
</dbReference>
<dbReference type="PIR" id="E70933">
    <property type="entry name" value="E70933"/>
</dbReference>
<dbReference type="RefSeq" id="WP_003403008.1">
    <property type="nucleotide sequence ID" value="NZ_KK341227.1"/>
</dbReference>
<dbReference type="SMR" id="P9WM78"/>
<dbReference type="KEGG" id="mtc:MT0602"/>
<dbReference type="PATRIC" id="fig|83331.31.peg.634"/>
<dbReference type="HOGENOM" id="CLU_038823_3_0_11"/>
<dbReference type="Proteomes" id="UP000001020">
    <property type="component" value="Chromosome"/>
</dbReference>
<dbReference type="CDD" id="cd07381">
    <property type="entry name" value="MPP_CapA"/>
    <property type="match status" value="1"/>
</dbReference>
<dbReference type="Gene3D" id="3.60.21.10">
    <property type="match status" value="1"/>
</dbReference>
<dbReference type="InterPro" id="IPR019079">
    <property type="entry name" value="Capsule_synth_CapA"/>
</dbReference>
<dbReference type="InterPro" id="IPR052169">
    <property type="entry name" value="CW_Biosynth-Accessory"/>
</dbReference>
<dbReference type="InterPro" id="IPR029052">
    <property type="entry name" value="Metallo-depent_PP-like"/>
</dbReference>
<dbReference type="PANTHER" id="PTHR33393">
    <property type="entry name" value="POLYGLUTAMINE SYNTHESIS ACCESSORY PROTEIN RV0574C-RELATED"/>
    <property type="match status" value="1"/>
</dbReference>
<dbReference type="PANTHER" id="PTHR33393:SF11">
    <property type="entry name" value="POLYGLUTAMINE SYNTHESIS ACCESSORY PROTEIN RV0574C-RELATED"/>
    <property type="match status" value="1"/>
</dbReference>
<dbReference type="Pfam" id="PF09587">
    <property type="entry name" value="PGA_cap"/>
    <property type="match status" value="1"/>
</dbReference>
<dbReference type="SMART" id="SM00854">
    <property type="entry name" value="PGA_cap"/>
    <property type="match status" value="1"/>
</dbReference>
<dbReference type="SUPFAM" id="SSF56300">
    <property type="entry name" value="Metallo-dependent phosphatases"/>
    <property type="match status" value="1"/>
</dbReference>
<comment type="function">
    <text evidence="1">Could be involved in the biosynthesis, transport or localization of poly-alpha-L-glutamine (PLG), a cell wall component. Contributes to stress tolerance and virulence.</text>
</comment>
<comment type="induction">
    <text evidence="2">A member of the dormancy regulon. Induced in response to reduced oxygen tension (hypoxia) and low levels of nitric oxide (NO).</text>
</comment>
<comment type="similarity">
    <text evidence="3">Belongs to the CapA family.</text>
</comment>
<organism>
    <name type="scientific">Mycobacterium tuberculosis (strain CDC 1551 / Oshkosh)</name>
    <dbReference type="NCBI Taxonomy" id="83331"/>
    <lineage>
        <taxon>Bacteria</taxon>
        <taxon>Bacillati</taxon>
        <taxon>Actinomycetota</taxon>
        <taxon>Actinomycetes</taxon>
        <taxon>Mycobacteriales</taxon>
        <taxon>Mycobacteriaceae</taxon>
        <taxon>Mycobacterium</taxon>
        <taxon>Mycobacterium tuberculosis complex</taxon>
    </lineage>
</organism>
<proteinExistence type="evidence at transcript level"/>